<feature type="chain" id="PRO_1000202157" description="Aspartate--tRNA ligase">
    <location>
        <begin position="1"/>
        <end position="598"/>
    </location>
</feature>
<feature type="region of interest" description="Aspartate" evidence="1">
    <location>
        <begin position="206"/>
        <end position="209"/>
    </location>
</feature>
<feature type="binding site" evidence="1">
    <location>
        <position position="182"/>
    </location>
    <ligand>
        <name>L-aspartate</name>
        <dbReference type="ChEBI" id="CHEBI:29991"/>
    </ligand>
</feature>
<feature type="binding site" evidence="1">
    <location>
        <begin position="228"/>
        <end position="230"/>
    </location>
    <ligand>
        <name>ATP</name>
        <dbReference type="ChEBI" id="CHEBI:30616"/>
    </ligand>
</feature>
<feature type="binding site" evidence="1">
    <location>
        <position position="228"/>
    </location>
    <ligand>
        <name>L-aspartate</name>
        <dbReference type="ChEBI" id="CHEBI:29991"/>
    </ligand>
</feature>
<feature type="binding site" evidence="1">
    <location>
        <position position="237"/>
    </location>
    <ligand>
        <name>ATP</name>
        <dbReference type="ChEBI" id="CHEBI:30616"/>
    </ligand>
</feature>
<feature type="binding site" evidence="1">
    <location>
        <position position="456"/>
    </location>
    <ligand>
        <name>L-aspartate</name>
        <dbReference type="ChEBI" id="CHEBI:29991"/>
    </ligand>
</feature>
<feature type="binding site" evidence="1">
    <location>
        <position position="490"/>
    </location>
    <ligand>
        <name>ATP</name>
        <dbReference type="ChEBI" id="CHEBI:30616"/>
    </ligand>
</feature>
<feature type="binding site" evidence="1">
    <location>
        <position position="497"/>
    </location>
    <ligand>
        <name>L-aspartate</name>
        <dbReference type="ChEBI" id="CHEBI:29991"/>
    </ligand>
</feature>
<feature type="binding site" evidence="1">
    <location>
        <begin position="542"/>
        <end position="545"/>
    </location>
    <ligand>
        <name>ATP</name>
        <dbReference type="ChEBI" id="CHEBI:30616"/>
    </ligand>
</feature>
<organism>
    <name type="scientific">Agathobacter rectalis (strain ATCC 33656 / DSM 3377 / JCM 17463 / KCTC 5835 / VPI 0990)</name>
    <name type="common">Eubacterium rectale</name>
    <dbReference type="NCBI Taxonomy" id="515619"/>
    <lineage>
        <taxon>Bacteria</taxon>
        <taxon>Bacillati</taxon>
        <taxon>Bacillota</taxon>
        <taxon>Clostridia</taxon>
        <taxon>Lachnospirales</taxon>
        <taxon>Lachnospiraceae</taxon>
        <taxon>Agathobacter</taxon>
    </lineage>
</organism>
<reference key="1">
    <citation type="journal article" date="2009" name="Proc. Natl. Acad. Sci. U.S.A.">
        <title>Characterizing a model human gut microbiota composed of members of its two dominant bacterial phyla.</title>
        <authorList>
            <person name="Mahowald M.A."/>
            <person name="Rey F.E."/>
            <person name="Seedorf H."/>
            <person name="Turnbaugh P.J."/>
            <person name="Fulton R.S."/>
            <person name="Wollam A."/>
            <person name="Shah N."/>
            <person name="Wang C."/>
            <person name="Magrini V."/>
            <person name="Wilson R.K."/>
            <person name="Cantarel B.L."/>
            <person name="Coutinho P.M."/>
            <person name="Henrissat B."/>
            <person name="Crock L.W."/>
            <person name="Russell A."/>
            <person name="Verberkmoes N.C."/>
            <person name="Hettich R.L."/>
            <person name="Gordon J.I."/>
        </authorList>
    </citation>
    <scope>NUCLEOTIDE SEQUENCE [LARGE SCALE GENOMIC DNA]</scope>
    <source>
        <strain>ATCC 33656 / DSM 3377 / JCM 17463 / KCTC 5835 / LMG 30912 / VPI 0990</strain>
    </source>
</reference>
<accession>C4ZI12</accession>
<name>SYD_AGARV</name>
<sequence length="598" mass="67490">MAESMQGLHRSHRCTEVSNANIGEKVTVMGWVQKRRNLGSLIFVDLRDRSGILQIVFGEENVGAEGFEKAGTLRSEFVIAVEGTVQKRTAAVNESLKTGDIEVIATSIRVLSEAQTPPFHIEENSKTSEDIRLKYRYLDLRRPDIQRNLMLRSNVLRVMRDFMANEGFLEIETPILCKSTPEGARDYLVPSRIHHGHFYALPQSPQLFKQLLMASGYDRYFQIARCFRDEDLRADRQPEFTQADMELSFVDIDDVIEVNERLLKHLFKEVINVDVEIPFKRMPWQEAMDRFGSDKPDTRFGMELCDVSEVVKDCGFGVFTGALENGGSVRGINVEGQAKMPRKKIDKLVEHAKGCGAKGLAYLCINEDGTYKSSFAKFMTEAELDALVAKMNGKPGDLLLFAADKNKIVWNVLGALRLMLGAELGLIDENKYNFLWVTEFPLLEWSDEENRFMAMHHPFTMPMEEDWDKIDSDPGAVRAKAYDIVLNGTELGGGSVRIHQDDIQEKMFEVLGFTKERAHEQFGFLLDAFSYGVPPHAGLAFGVDRICMHMLHTDNIKEVIAFPKVKDASDLMSEAPGTVDPKQLEELGIAVAAEEDEE</sequence>
<gene>
    <name evidence="1" type="primary">aspS</name>
    <name type="ordered locus">EUBREC_2920</name>
</gene>
<keyword id="KW-0030">Aminoacyl-tRNA synthetase</keyword>
<keyword id="KW-0067">ATP-binding</keyword>
<keyword id="KW-0963">Cytoplasm</keyword>
<keyword id="KW-0436">Ligase</keyword>
<keyword id="KW-0547">Nucleotide-binding</keyword>
<keyword id="KW-0648">Protein biosynthesis</keyword>
<evidence type="ECO:0000255" key="1">
    <source>
        <dbReference type="HAMAP-Rule" id="MF_00044"/>
    </source>
</evidence>
<proteinExistence type="inferred from homology"/>
<dbReference type="EC" id="6.1.1.12" evidence="1"/>
<dbReference type="EMBL" id="CP001107">
    <property type="protein sequence ID" value="ACR76649.1"/>
    <property type="molecule type" value="Genomic_DNA"/>
</dbReference>
<dbReference type="RefSeq" id="WP_012743676.1">
    <property type="nucleotide sequence ID" value="NC_012781.1"/>
</dbReference>
<dbReference type="SMR" id="C4ZI12"/>
<dbReference type="STRING" id="515619.EUBREC_2920"/>
<dbReference type="PaxDb" id="515619-EUBREC_2920"/>
<dbReference type="GeneID" id="86989621"/>
<dbReference type="KEGG" id="ere:EUBREC_2920"/>
<dbReference type="HOGENOM" id="CLU_014330_3_2_9"/>
<dbReference type="Proteomes" id="UP000001477">
    <property type="component" value="Chromosome"/>
</dbReference>
<dbReference type="GO" id="GO:0005737">
    <property type="term" value="C:cytoplasm"/>
    <property type="evidence" value="ECO:0007669"/>
    <property type="project" value="UniProtKB-SubCell"/>
</dbReference>
<dbReference type="GO" id="GO:0004815">
    <property type="term" value="F:aspartate-tRNA ligase activity"/>
    <property type="evidence" value="ECO:0007669"/>
    <property type="project" value="UniProtKB-UniRule"/>
</dbReference>
<dbReference type="GO" id="GO:0005524">
    <property type="term" value="F:ATP binding"/>
    <property type="evidence" value="ECO:0007669"/>
    <property type="project" value="UniProtKB-UniRule"/>
</dbReference>
<dbReference type="GO" id="GO:0140096">
    <property type="term" value="F:catalytic activity, acting on a protein"/>
    <property type="evidence" value="ECO:0007669"/>
    <property type="project" value="UniProtKB-ARBA"/>
</dbReference>
<dbReference type="GO" id="GO:0003676">
    <property type="term" value="F:nucleic acid binding"/>
    <property type="evidence" value="ECO:0007669"/>
    <property type="project" value="InterPro"/>
</dbReference>
<dbReference type="GO" id="GO:0016740">
    <property type="term" value="F:transferase activity"/>
    <property type="evidence" value="ECO:0007669"/>
    <property type="project" value="UniProtKB-ARBA"/>
</dbReference>
<dbReference type="GO" id="GO:0006422">
    <property type="term" value="P:aspartyl-tRNA aminoacylation"/>
    <property type="evidence" value="ECO:0007669"/>
    <property type="project" value="UniProtKB-UniRule"/>
</dbReference>
<dbReference type="CDD" id="cd00777">
    <property type="entry name" value="AspRS_core"/>
    <property type="match status" value="1"/>
</dbReference>
<dbReference type="CDD" id="cd04317">
    <property type="entry name" value="EcAspRS_like_N"/>
    <property type="match status" value="1"/>
</dbReference>
<dbReference type="Gene3D" id="3.30.930.10">
    <property type="entry name" value="Bira Bifunctional Protein, Domain 2"/>
    <property type="match status" value="1"/>
</dbReference>
<dbReference type="Gene3D" id="3.30.1360.30">
    <property type="entry name" value="GAD-like domain"/>
    <property type="match status" value="1"/>
</dbReference>
<dbReference type="Gene3D" id="2.40.50.140">
    <property type="entry name" value="Nucleic acid-binding proteins"/>
    <property type="match status" value="1"/>
</dbReference>
<dbReference type="HAMAP" id="MF_00044">
    <property type="entry name" value="Asp_tRNA_synth_type1"/>
    <property type="match status" value="1"/>
</dbReference>
<dbReference type="InterPro" id="IPR004364">
    <property type="entry name" value="Aa-tRNA-synt_II"/>
</dbReference>
<dbReference type="InterPro" id="IPR006195">
    <property type="entry name" value="aa-tRNA-synth_II"/>
</dbReference>
<dbReference type="InterPro" id="IPR045864">
    <property type="entry name" value="aa-tRNA-synth_II/BPL/LPL"/>
</dbReference>
<dbReference type="InterPro" id="IPR004524">
    <property type="entry name" value="Asp-tRNA-ligase_1"/>
</dbReference>
<dbReference type="InterPro" id="IPR047089">
    <property type="entry name" value="Asp-tRNA-ligase_1_N"/>
</dbReference>
<dbReference type="InterPro" id="IPR002312">
    <property type="entry name" value="Asp/Asn-tRNA-synth_IIb"/>
</dbReference>
<dbReference type="InterPro" id="IPR047090">
    <property type="entry name" value="AspRS_core"/>
</dbReference>
<dbReference type="InterPro" id="IPR004115">
    <property type="entry name" value="GAD-like_sf"/>
</dbReference>
<dbReference type="InterPro" id="IPR029351">
    <property type="entry name" value="GAD_dom"/>
</dbReference>
<dbReference type="InterPro" id="IPR012340">
    <property type="entry name" value="NA-bd_OB-fold"/>
</dbReference>
<dbReference type="InterPro" id="IPR004365">
    <property type="entry name" value="NA-bd_OB_tRNA"/>
</dbReference>
<dbReference type="NCBIfam" id="TIGR00459">
    <property type="entry name" value="aspS_bact"/>
    <property type="match status" value="1"/>
</dbReference>
<dbReference type="NCBIfam" id="NF001750">
    <property type="entry name" value="PRK00476.1"/>
    <property type="match status" value="1"/>
</dbReference>
<dbReference type="PANTHER" id="PTHR22594:SF5">
    <property type="entry name" value="ASPARTATE--TRNA LIGASE, MITOCHONDRIAL"/>
    <property type="match status" value="1"/>
</dbReference>
<dbReference type="PANTHER" id="PTHR22594">
    <property type="entry name" value="ASPARTYL/LYSYL-TRNA SYNTHETASE"/>
    <property type="match status" value="1"/>
</dbReference>
<dbReference type="Pfam" id="PF02938">
    <property type="entry name" value="GAD"/>
    <property type="match status" value="1"/>
</dbReference>
<dbReference type="Pfam" id="PF00152">
    <property type="entry name" value="tRNA-synt_2"/>
    <property type="match status" value="1"/>
</dbReference>
<dbReference type="Pfam" id="PF01336">
    <property type="entry name" value="tRNA_anti-codon"/>
    <property type="match status" value="1"/>
</dbReference>
<dbReference type="PRINTS" id="PR01042">
    <property type="entry name" value="TRNASYNTHASP"/>
</dbReference>
<dbReference type="SUPFAM" id="SSF55681">
    <property type="entry name" value="Class II aaRS and biotin synthetases"/>
    <property type="match status" value="1"/>
</dbReference>
<dbReference type="SUPFAM" id="SSF55261">
    <property type="entry name" value="GAD domain-like"/>
    <property type="match status" value="1"/>
</dbReference>
<dbReference type="SUPFAM" id="SSF50249">
    <property type="entry name" value="Nucleic acid-binding proteins"/>
    <property type="match status" value="1"/>
</dbReference>
<dbReference type="PROSITE" id="PS50862">
    <property type="entry name" value="AA_TRNA_LIGASE_II"/>
    <property type="match status" value="1"/>
</dbReference>
<protein>
    <recommendedName>
        <fullName evidence="1">Aspartate--tRNA ligase</fullName>
        <ecNumber evidence="1">6.1.1.12</ecNumber>
    </recommendedName>
    <alternativeName>
        <fullName evidence="1">Aspartyl-tRNA synthetase</fullName>
        <shortName evidence="1">AspRS</shortName>
    </alternativeName>
</protein>
<comment type="function">
    <text evidence="1">Catalyzes the attachment of L-aspartate to tRNA(Asp) in a two-step reaction: L-aspartate is first activated by ATP to form Asp-AMP and then transferred to the acceptor end of tRNA(Asp).</text>
</comment>
<comment type="catalytic activity">
    <reaction evidence="1">
        <text>tRNA(Asp) + L-aspartate + ATP = L-aspartyl-tRNA(Asp) + AMP + diphosphate</text>
        <dbReference type="Rhea" id="RHEA:19649"/>
        <dbReference type="Rhea" id="RHEA-COMP:9660"/>
        <dbReference type="Rhea" id="RHEA-COMP:9678"/>
        <dbReference type="ChEBI" id="CHEBI:29991"/>
        <dbReference type="ChEBI" id="CHEBI:30616"/>
        <dbReference type="ChEBI" id="CHEBI:33019"/>
        <dbReference type="ChEBI" id="CHEBI:78442"/>
        <dbReference type="ChEBI" id="CHEBI:78516"/>
        <dbReference type="ChEBI" id="CHEBI:456215"/>
        <dbReference type="EC" id="6.1.1.12"/>
    </reaction>
</comment>
<comment type="subunit">
    <text evidence="1">Homodimer.</text>
</comment>
<comment type="subcellular location">
    <subcellularLocation>
        <location evidence="1">Cytoplasm</location>
    </subcellularLocation>
</comment>
<comment type="similarity">
    <text evidence="1">Belongs to the class-II aminoacyl-tRNA synthetase family. Type 1 subfamily.</text>
</comment>